<feature type="chain" id="PRO_0000266196" description="CTP synthase">
    <location>
        <begin position="1"/>
        <end position="591"/>
    </location>
</feature>
<feature type="domain" description="Glutamine amidotransferase type-1" evidence="1">
    <location>
        <begin position="306"/>
        <end position="554"/>
    </location>
</feature>
<feature type="region of interest" description="Amidoligase domain" evidence="1">
    <location>
        <begin position="1"/>
        <end position="281"/>
    </location>
</feature>
<feature type="region of interest" description="Disordered" evidence="2">
    <location>
        <begin position="568"/>
        <end position="591"/>
    </location>
</feature>
<feature type="active site" description="Nucleophile; for glutamine hydrolysis" evidence="1">
    <location>
        <position position="396"/>
    </location>
</feature>
<feature type="active site" evidence="1">
    <location>
        <position position="527"/>
    </location>
</feature>
<feature type="active site" evidence="1">
    <location>
        <position position="529"/>
    </location>
</feature>
<feature type="binding site" evidence="1">
    <location>
        <position position="23"/>
    </location>
    <ligand>
        <name>CTP</name>
        <dbReference type="ChEBI" id="CHEBI:37563"/>
        <note>allosteric inhibitor</note>
    </ligand>
</feature>
<feature type="binding site" evidence="1">
    <location>
        <position position="23"/>
    </location>
    <ligand>
        <name>UTP</name>
        <dbReference type="ChEBI" id="CHEBI:46398"/>
    </ligand>
</feature>
<feature type="binding site" evidence="1">
    <location>
        <begin position="24"/>
        <end position="29"/>
    </location>
    <ligand>
        <name>ATP</name>
        <dbReference type="ChEBI" id="CHEBI:30616"/>
    </ligand>
</feature>
<feature type="binding site" evidence="1">
    <location>
        <position position="81"/>
    </location>
    <ligand>
        <name>ATP</name>
        <dbReference type="ChEBI" id="CHEBI:30616"/>
    </ligand>
</feature>
<feature type="binding site" evidence="1">
    <location>
        <position position="81"/>
    </location>
    <ligand>
        <name>Mg(2+)</name>
        <dbReference type="ChEBI" id="CHEBI:18420"/>
    </ligand>
</feature>
<feature type="binding site" evidence="1">
    <location>
        <position position="155"/>
    </location>
    <ligand>
        <name>Mg(2+)</name>
        <dbReference type="ChEBI" id="CHEBI:18420"/>
    </ligand>
</feature>
<feature type="binding site" evidence="1">
    <location>
        <begin position="162"/>
        <end position="164"/>
    </location>
    <ligand>
        <name>CTP</name>
        <dbReference type="ChEBI" id="CHEBI:37563"/>
        <note>allosteric inhibitor</note>
    </ligand>
</feature>
<feature type="binding site" evidence="1">
    <location>
        <begin position="202"/>
        <end position="207"/>
    </location>
    <ligand>
        <name>CTP</name>
        <dbReference type="ChEBI" id="CHEBI:37563"/>
        <note>allosteric inhibitor</note>
    </ligand>
</feature>
<feature type="binding site" evidence="1">
    <location>
        <begin position="202"/>
        <end position="207"/>
    </location>
    <ligand>
        <name>UTP</name>
        <dbReference type="ChEBI" id="CHEBI:46398"/>
    </ligand>
</feature>
<feature type="binding site" evidence="1">
    <location>
        <position position="238"/>
    </location>
    <ligand>
        <name>CTP</name>
        <dbReference type="ChEBI" id="CHEBI:37563"/>
        <note>allosteric inhibitor</note>
    </ligand>
</feature>
<feature type="binding site" evidence="1">
    <location>
        <position position="238"/>
    </location>
    <ligand>
        <name>UTP</name>
        <dbReference type="ChEBI" id="CHEBI:46398"/>
    </ligand>
</feature>
<feature type="binding site" evidence="1">
    <location>
        <position position="369"/>
    </location>
    <ligand>
        <name>L-glutamine</name>
        <dbReference type="ChEBI" id="CHEBI:58359"/>
    </ligand>
</feature>
<feature type="binding site" evidence="1">
    <location>
        <begin position="397"/>
        <end position="400"/>
    </location>
    <ligand>
        <name>L-glutamine</name>
        <dbReference type="ChEBI" id="CHEBI:58359"/>
    </ligand>
</feature>
<feature type="binding site" evidence="1">
    <location>
        <position position="419"/>
    </location>
    <ligand>
        <name>L-glutamine</name>
        <dbReference type="ChEBI" id="CHEBI:58359"/>
    </ligand>
</feature>
<feature type="binding site" evidence="1">
    <location>
        <position position="480"/>
    </location>
    <ligand>
        <name>L-glutamine</name>
        <dbReference type="ChEBI" id="CHEBI:58359"/>
    </ligand>
</feature>
<gene>
    <name evidence="1" type="primary">pyrG</name>
    <name type="ordered locus">RHA1_ro00931</name>
</gene>
<proteinExistence type="inferred from homology"/>
<accession>Q0SI74</accession>
<sequence>MPQSRTHSRTATKHIFVSGGVASSLGKGLTASSLGQLLTARGMRVTMQKLDPYLNVDPGTMNPFQHGEVFVTDDGAETDLDVGHYERFLDRDLSGQANVTTGQVYSTVIAKERRGEYLGDTVQVIPHITDEIKSRILAMSGPDLQGHQPDVVITEIGGTVGDIESQPFLEAARQVRHDVGRDNVFFLHVSLVPYLAPSGELKTKPTQHSVAALRNIGIQPDALILRCDREVPPALKNKIALMCDVDVDGCISTPDAPSIYDIPKVLHSEGLDAYVVRQLGLPFRDVDWTVWGNLLERVHQPRETVRIALVGKYVDLPDAYLSVTEALRAGGFANRSKVEISWVPSDACETEAGAQAALGDVDGVLIPGGFGIRGIEGKLGAIRYARHRKIPLLGLCLGLQCVVIEAARSVGLDDANSAEFEPETTHPVISTMADQEDVIAGEADLGGTMRLGAYPAVLTKGSVVARAYGSEEVSERHRHRYEVNNAYRDRIAKSGLRFSGTSPDGHLVEFVEYPADQHPFFVATQAHPELKSRPTRPHPLFAAFVDAALKHKLEERLPVDVHGEERAAVATDDELADSADRDEVASVDSAG</sequence>
<comment type="function">
    <text evidence="1">Catalyzes the ATP-dependent amination of UTP to CTP with either L-glutamine or ammonia as the source of nitrogen. Regulates intracellular CTP levels through interactions with the four ribonucleotide triphosphates.</text>
</comment>
<comment type="catalytic activity">
    <reaction evidence="1">
        <text>UTP + L-glutamine + ATP + H2O = CTP + L-glutamate + ADP + phosphate + 2 H(+)</text>
        <dbReference type="Rhea" id="RHEA:26426"/>
        <dbReference type="ChEBI" id="CHEBI:15377"/>
        <dbReference type="ChEBI" id="CHEBI:15378"/>
        <dbReference type="ChEBI" id="CHEBI:29985"/>
        <dbReference type="ChEBI" id="CHEBI:30616"/>
        <dbReference type="ChEBI" id="CHEBI:37563"/>
        <dbReference type="ChEBI" id="CHEBI:43474"/>
        <dbReference type="ChEBI" id="CHEBI:46398"/>
        <dbReference type="ChEBI" id="CHEBI:58359"/>
        <dbReference type="ChEBI" id="CHEBI:456216"/>
        <dbReference type="EC" id="6.3.4.2"/>
    </reaction>
</comment>
<comment type="catalytic activity">
    <reaction evidence="1">
        <text>L-glutamine + H2O = L-glutamate + NH4(+)</text>
        <dbReference type="Rhea" id="RHEA:15889"/>
        <dbReference type="ChEBI" id="CHEBI:15377"/>
        <dbReference type="ChEBI" id="CHEBI:28938"/>
        <dbReference type="ChEBI" id="CHEBI:29985"/>
        <dbReference type="ChEBI" id="CHEBI:58359"/>
    </reaction>
</comment>
<comment type="catalytic activity">
    <reaction evidence="1">
        <text>UTP + NH4(+) + ATP = CTP + ADP + phosphate + 2 H(+)</text>
        <dbReference type="Rhea" id="RHEA:16597"/>
        <dbReference type="ChEBI" id="CHEBI:15378"/>
        <dbReference type="ChEBI" id="CHEBI:28938"/>
        <dbReference type="ChEBI" id="CHEBI:30616"/>
        <dbReference type="ChEBI" id="CHEBI:37563"/>
        <dbReference type="ChEBI" id="CHEBI:43474"/>
        <dbReference type="ChEBI" id="CHEBI:46398"/>
        <dbReference type="ChEBI" id="CHEBI:456216"/>
    </reaction>
</comment>
<comment type="activity regulation">
    <text evidence="1">Allosterically activated by GTP, when glutamine is the substrate; GTP has no effect on the reaction when ammonia is the substrate. The allosteric effector GTP functions by stabilizing the protein conformation that binds the tetrahedral intermediate(s) formed during glutamine hydrolysis. Inhibited by the product CTP, via allosteric rather than competitive inhibition.</text>
</comment>
<comment type="pathway">
    <text evidence="1">Pyrimidine metabolism; CTP biosynthesis via de novo pathway; CTP from UDP: step 2/2.</text>
</comment>
<comment type="subunit">
    <text evidence="1">Homotetramer.</text>
</comment>
<comment type="miscellaneous">
    <text evidence="1">CTPSs have evolved a hybrid strategy for distinguishing between UTP and CTP. The overlapping regions of the product feedback inhibitory and substrate sites recognize a common feature in both compounds, the triphosphate moiety. To differentiate isosteric substrate and product pyrimidine rings, an additional pocket far from the expected kinase/ligase catalytic site, specifically recognizes the cytosine and ribose portions of the product inhibitor.</text>
</comment>
<comment type="similarity">
    <text evidence="1">Belongs to the CTP synthase family.</text>
</comment>
<organism>
    <name type="scientific">Rhodococcus jostii (strain RHA1)</name>
    <dbReference type="NCBI Taxonomy" id="101510"/>
    <lineage>
        <taxon>Bacteria</taxon>
        <taxon>Bacillati</taxon>
        <taxon>Actinomycetota</taxon>
        <taxon>Actinomycetes</taxon>
        <taxon>Mycobacteriales</taxon>
        <taxon>Nocardiaceae</taxon>
        <taxon>Rhodococcus</taxon>
    </lineage>
</organism>
<name>PYRG_RHOJR</name>
<keyword id="KW-0067">ATP-binding</keyword>
<keyword id="KW-0315">Glutamine amidotransferase</keyword>
<keyword id="KW-0436">Ligase</keyword>
<keyword id="KW-0460">Magnesium</keyword>
<keyword id="KW-0479">Metal-binding</keyword>
<keyword id="KW-0547">Nucleotide-binding</keyword>
<keyword id="KW-0665">Pyrimidine biosynthesis</keyword>
<reference key="1">
    <citation type="journal article" date="2006" name="Proc. Natl. Acad. Sci. U.S.A.">
        <title>The complete genome of Rhodococcus sp. RHA1 provides insights into a catabolic powerhouse.</title>
        <authorList>
            <person name="McLeod M.P."/>
            <person name="Warren R.L."/>
            <person name="Hsiao W.W.L."/>
            <person name="Araki N."/>
            <person name="Myhre M."/>
            <person name="Fernandes C."/>
            <person name="Miyazawa D."/>
            <person name="Wong W."/>
            <person name="Lillquist A.L."/>
            <person name="Wang D."/>
            <person name="Dosanjh M."/>
            <person name="Hara H."/>
            <person name="Petrescu A."/>
            <person name="Morin R.D."/>
            <person name="Yang G."/>
            <person name="Stott J.M."/>
            <person name="Schein J.E."/>
            <person name="Shin H."/>
            <person name="Smailus D."/>
            <person name="Siddiqui A.S."/>
            <person name="Marra M.A."/>
            <person name="Jones S.J.M."/>
            <person name="Holt R."/>
            <person name="Brinkman F.S.L."/>
            <person name="Miyauchi K."/>
            <person name="Fukuda M."/>
            <person name="Davies J.E."/>
            <person name="Mohn W.W."/>
            <person name="Eltis L.D."/>
        </authorList>
    </citation>
    <scope>NUCLEOTIDE SEQUENCE [LARGE SCALE GENOMIC DNA]</scope>
    <source>
        <strain>RHA1</strain>
    </source>
</reference>
<protein>
    <recommendedName>
        <fullName evidence="1">CTP synthase</fullName>
        <ecNumber evidence="1">6.3.4.2</ecNumber>
    </recommendedName>
    <alternativeName>
        <fullName evidence="1">Cytidine 5'-triphosphate synthase</fullName>
    </alternativeName>
    <alternativeName>
        <fullName evidence="1">Cytidine triphosphate synthetase</fullName>
        <shortName evidence="1">CTP synthetase</shortName>
        <shortName evidence="1">CTPS</shortName>
    </alternativeName>
    <alternativeName>
        <fullName evidence="1">UTP--ammonia ligase</fullName>
    </alternativeName>
</protein>
<evidence type="ECO:0000255" key="1">
    <source>
        <dbReference type="HAMAP-Rule" id="MF_01227"/>
    </source>
</evidence>
<evidence type="ECO:0000256" key="2">
    <source>
        <dbReference type="SAM" id="MobiDB-lite"/>
    </source>
</evidence>
<dbReference type="EC" id="6.3.4.2" evidence="1"/>
<dbReference type="EMBL" id="CP000431">
    <property type="protein sequence ID" value="ABG92762.1"/>
    <property type="molecule type" value="Genomic_DNA"/>
</dbReference>
<dbReference type="RefSeq" id="WP_011594131.1">
    <property type="nucleotide sequence ID" value="NC_008268.1"/>
</dbReference>
<dbReference type="SMR" id="Q0SI74"/>
<dbReference type="MEROPS" id="C26.964"/>
<dbReference type="KEGG" id="rha:RHA1_ro00931"/>
<dbReference type="PATRIC" id="fig|101510.16.peg.952"/>
<dbReference type="eggNOG" id="COG0504">
    <property type="taxonomic scope" value="Bacteria"/>
</dbReference>
<dbReference type="HOGENOM" id="CLU_011675_5_0_11"/>
<dbReference type="OrthoDB" id="9801107at2"/>
<dbReference type="UniPathway" id="UPA00159">
    <property type="reaction ID" value="UER00277"/>
</dbReference>
<dbReference type="Proteomes" id="UP000008710">
    <property type="component" value="Chromosome"/>
</dbReference>
<dbReference type="GO" id="GO:0005829">
    <property type="term" value="C:cytosol"/>
    <property type="evidence" value="ECO:0007669"/>
    <property type="project" value="TreeGrafter"/>
</dbReference>
<dbReference type="GO" id="GO:0005524">
    <property type="term" value="F:ATP binding"/>
    <property type="evidence" value="ECO:0007669"/>
    <property type="project" value="UniProtKB-KW"/>
</dbReference>
<dbReference type="GO" id="GO:0003883">
    <property type="term" value="F:CTP synthase activity"/>
    <property type="evidence" value="ECO:0007669"/>
    <property type="project" value="UniProtKB-UniRule"/>
</dbReference>
<dbReference type="GO" id="GO:0004359">
    <property type="term" value="F:glutaminase activity"/>
    <property type="evidence" value="ECO:0007669"/>
    <property type="project" value="RHEA"/>
</dbReference>
<dbReference type="GO" id="GO:0042802">
    <property type="term" value="F:identical protein binding"/>
    <property type="evidence" value="ECO:0007669"/>
    <property type="project" value="TreeGrafter"/>
</dbReference>
<dbReference type="GO" id="GO:0046872">
    <property type="term" value="F:metal ion binding"/>
    <property type="evidence" value="ECO:0007669"/>
    <property type="project" value="UniProtKB-KW"/>
</dbReference>
<dbReference type="GO" id="GO:0044210">
    <property type="term" value="P:'de novo' CTP biosynthetic process"/>
    <property type="evidence" value="ECO:0007669"/>
    <property type="project" value="UniProtKB-UniRule"/>
</dbReference>
<dbReference type="GO" id="GO:0019856">
    <property type="term" value="P:pyrimidine nucleobase biosynthetic process"/>
    <property type="evidence" value="ECO:0007669"/>
    <property type="project" value="TreeGrafter"/>
</dbReference>
<dbReference type="CDD" id="cd03113">
    <property type="entry name" value="CTPS_N"/>
    <property type="match status" value="1"/>
</dbReference>
<dbReference type="CDD" id="cd01746">
    <property type="entry name" value="GATase1_CTP_Synthase"/>
    <property type="match status" value="1"/>
</dbReference>
<dbReference type="FunFam" id="3.40.50.300:FF:000009">
    <property type="entry name" value="CTP synthase"/>
    <property type="match status" value="1"/>
</dbReference>
<dbReference type="FunFam" id="3.40.50.880:FF:000002">
    <property type="entry name" value="CTP synthase"/>
    <property type="match status" value="1"/>
</dbReference>
<dbReference type="Gene3D" id="3.40.50.880">
    <property type="match status" value="1"/>
</dbReference>
<dbReference type="Gene3D" id="3.40.50.300">
    <property type="entry name" value="P-loop containing nucleotide triphosphate hydrolases"/>
    <property type="match status" value="1"/>
</dbReference>
<dbReference type="HAMAP" id="MF_01227">
    <property type="entry name" value="PyrG"/>
    <property type="match status" value="1"/>
</dbReference>
<dbReference type="InterPro" id="IPR029062">
    <property type="entry name" value="Class_I_gatase-like"/>
</dbReference>
<dbReference type="InterPro" id="IPR004468">
    <property type="entry name" value="CTP_synthase"/>
</dbReference>
<dbReference type="InterPro" id="IPR017456">
    <property type="entry name" value="CTP_synthase_N"/>
</dbReference>
<dbReference type="InterPro" id="IPR017926">
    <property type="entry name" value="GATASE"/>
</dbReference>
<dbReference type="InterPro" id="IPR033828">
    <property type="entry name" value="GATase1_CTP_Synthase"/>
</dbReference>
<dbReference type="InterPro" id="IPR027417">
    <property type="entry name" value="P-loop_NTPase"/>
</dbReference>
<dbReference type="NCBIfam" id="NF003792">
    <property type="entry name" value="PRK05380.1"/>
    <property type="match status" value="1"/>
</dbReference>
<dbReference type="NCBIfam" id="TIGR00337">
    <property type="entry name" value="PyrG"/>
    <property type="match status" value="1"/>
</dbReference>
<dbReference type="PANTHER" id="PTHR11550">
    <property type="entry name" value="CTP SYNTHASE"/>
    <property type="match status" value="1"/>
</dbReference>
<dbReference type="PANTHER" id="PTHR11550:SF0">
    <property type="entry name" value="CTP SYNTHASE-RELATED"/>
    <property type="match status" value="1"/>
</dbReference>
<dbReference type="Pfam" id="PF06418">
    <property type="entry name" value="CTP_synth_N"/>
    <property type="match status" value="1"/>
</dbReference>
<dbReference type="Pfam" id="PF00117">
    <property type="entry name" value="GATase"/>
    <property type="match status" value="1"/>
</dbReference>
<dbReference type="SUPFAM" id="SSF52317">
    <property type="entry name" value="Class I glutamine amidotransferase-like"/>
    <property type="match status" value="1"/>
</dbReference>
<dbReference type="SUPFAM" id="SSF52540">
    <property type="entry name" value="P-loop containing nucleoside triphosphate hydrolases"/>
    <property type="match status" value="1"/>
</dbReference>
<dbReference type="PROSITE" id="PS51273">
    <property type="entry name" value="GATASE_TYPE_1"/>
    <property type="match status" value="1"/>
</dbReference>